<keyword id="KW-0150">Chloroplast</keyword>
<keyword id="KW-0507">mRNA processing</keyword>
<keyword id="KW-0934">Plastid</keyword>
<keyword id="KW-0694">RNA-binding</keyword>
<keyword id="KW-0819">tRNA processing</keyword>
<organism>
    <name type="scientific">Amentotaxus argotaenia</name>
    <name type="common">Chinese flowering yew</name>
    <name type="synonym">Podocarpus argotaenia</name>
    <dbReference type="NCBI Taxonomy" id="25625"/>
    <lineage>
        <taxon>Eukaryota</taxon>
        <taxon>Viridiplantae</taxon>
        <taxon>Streptophyta</taxon>
        <taxon>Embryophyta</taxon>
        <taxon>Tracheophyta</taxon>
        <taxon>Spermatophyta</taxon>
        <taxon>Pinopsida</taxon>
        <taxon>Pinidae</taxon>
        <taxon>Conifers II</taxon>
        <taxon>Cupressales</taxon>
        <taxon>Taxaceae</taxon>
        <taxon>Amentotaxus</taxon>
    </lineage>
</organism>
<gene>
    <name evidence="1" type="primary">matK</name>
</gene>
<geneLocation type="chloroplast"/>
<sequence>MDEFQREGNKHRFWQQCFLYQIFFGEDLNAMVHDHHLDRSSSFERTEILISNYFSFLTVKRLIRRIRQQNDSTGLFGNCDPNQFIDRNRNSYSESVLEALTVILEVSFAMRSKHFLEGINGWKSIRSIHCIFPLMEDKFPYSNYISDIRVPYSIHPELLVRTFRRWIRDTPSLHLLRFILHSWKNSFSAENLQKAMVAPRENMRLSLFLWNSYVYECESFLVPLLKRFSHSQSLLYGSFPNXNHFVRKIKHIVIFPXINISTXRIWLLKDPFIQYVRYGERSLIALKGTHLQVKKCRYHLFHFWQYYFHLWSQPYRICILELSKNYSFFLGYFLSFKMKPLVVRTKMLNDLFITNLITNELNPIAPIRSILFFLAKERFCDISGQTISKLSWTSLSDDDILDRFDRICRNLFHYYSGSINPDGLYYIKYILLLPCAKTLACKHKSTIRVVREESGSELFTKSFSKEREFISSSFSKTRSQRERFWNSDIIQINPLSNSWQKIQNKQVEN</sequence>
<proteinExistence type="inferred from homology"/>
<comment type="function">
    <text evidence="1">Usually encoded in the trnK tRNA gene intron. Probably assists in splicing its own and other chloroplast group II introns.</text>
</comment>
<comment type="subcellular location">
    <subcellularLocation>
        <location>Plastid</location>
        <location>Chloroplast</location>
    </subcellularLocation>
</comment>
<comment type="similarity">
    <text evidence="1">Belongs to the intron maturase 2 family. MatK subfamily.</text>
</comment>
<accession>Q9MSR8</accession>
<dbReference type="EMBL" id="AF152219">
    <property type="protein sequence ID" value="AAF25772.1"/>
    <property type="molecule type" value="Genomic_DNA"/>
</dbReference>
<dbReference type="GO" id="GO:0009507">
    <property type="term" value="C:chloroplast"/>
    <property type="evidence" value="ECO:0007669"/>
    <property type="project" value="UniProtKB-SubCell"/>
</dbReference>
<dbReference type="GO" id="GO:0003723">
    <property type="term" value="F:RNA binding"/>
    <property type="evidence" value="ECO:0007669"/>
    <property type="project" value="UniProtKB-KW"/>
</dbReference>
<dbReference type="GO" id="GO:0006397">
    <property type="term" value="P:mRNA processing"/>
    <property type="evidence" value="ECO:0007669"/>
    <property type="project" value="UniProtKB-KW"/>
</dbReference>
<dbReference type="GO" id="GO:0008380">
    <property type="term" value="P:RNA splicing"/>
    <property type="evidence" value="ECO:0007669"/>
    <property type="project" value="UniProtKB-UniRule"/>
</dbReference>
<dbReference type="GO" id="GO:0008033">
    <property type="term" value="P:tRNA processing"/>
    <property type="evidence" value="ECO:0007669"/>
    <property type="project" value="UniProtKB-KW"/>
</dbReference>
<dbReference type="HAMAP" id="MF_01390">
    <property type="entry name" value="MatK"/>
    <property type="match status" value="1"/>
</dbReference>
<dbReference type="InterPro" id="IPR024937">
    <property type="entry name" value="Domain_X"/>
</dbReference>
<dbReference type="InterPro" id="IPR002866">
    <property type="entry name" value="Maturase_MatK"/>
</dbReference>
<dbReference type="InterPro" id="IPR024942">
    <property type="entry name" value="Maturase_MatK_N"/>
</dbReference>
<dbReference type="PANTHER" id="PTHR34811">
    <property type="entry name" value="MATURASE K"/>
    <property type="match status" value="1"/>
</dbReference>
<dbReference type="PANTHER" id="PTHR34811:SF1">
    <property type="entry name" value="MATURASE K"/>
    <property type="match status" value="1"/>
</dbReference>
<dbReference type="Pfam" id="PF01348">
    <property type="entry name" value="Intron_maturas2"/>
    <property type="match status" value="1"/>
</dbReference>
<dbReference type="Pfam" id="PF01824">
    <property type="entry name" value="MatK_N"/>
    <property type="match status" value="1"/>
</dbReference>
<feature type="chain" id="PRO_0000143228" description="Maturase K">
    <location>
        <begin position="1"/>
        <end position="509"/>
    </location>
</feature>
<name>MATK_AMEAR</name>
<evidence type="ECO:0000255" key="1">
    <source>
        <dbReference type="HAMAP-Rule" id="MF_01390"/>
    </source>
</evidence>
<reference key="1">
    <citation type="journal article" date="2000" name="Am. J. Bot.">
        <title>Relationships within Cupressaceae sensu lato: a combined morphological and molecular approach.</title>
        <authorList>
            <person name="Gadek P.A."/>
            <person name="Alpers D.L."/>
            <person name="Heslewood M.M."/>
            <person name="Quinn C.J."/>
        </authorList>
    </citation>
    <scope>NUCLEOTIDE SEQUENCE [GENOMIC DNA]</scope>
</reference>
<protein>
    <recommendedName>
        <fullName evidence="1">Maturase K</fullName>
    </recommendedName>
    <alternativeName>
        <fullName evidence="1">Intron maturase</fullName>
    </alternativeName>
</protein>